<keyword id="KW-1185">Reference proteome</keyword>
<keyword id="KW-0687">Ribonucleoprotein</keyword>
<keyword id="KW-0689">Ribosomal protein</keyword>
<organism>
    <name type="scientific">Arabidopsis thaliana</name>
    <name type="common">Mouse-ear cress</name>
    <dbReference type="NCBI Taxonomy" id="3702"/>
    <lineage>
        <taxon>Eukaryota</taxon>
        <taxon>Viridiplantae</taxon>
        <taxon>Streptophyta</taxon>
        <taxon>Embryophyta</taxon>
        <taxon>Tracheophyta</taxon>
        <taxon>Spermatophyta</taxon>
        <taxon>Magnoliopsida</taxon>
        <taxon>eudicotyledons</taxon>
        <taxon>Gunneridae</taxon>
        <taxon>Pentapetalae</taxon>
        <taxon>rosids</taxon>
        <taxon>malvids</taxon>
        <taxon>Brassicales</taxon>
        <taxon>Brassicaceae</taxon>
        <taxon>Camelineae</taxon>
        <taxon>Arabidopsis</taxon>
    </lineage>
</organism>
<gene>
    <name type="primary">RPL35C</name>
    <name type="ordered locus">At3g55170</name>
    <name type="ORF">T26I12.50</name>
</gene>
<dbReference type="EMBL" id="AL132954">
    <property type="protein sequence ID" value="CAB75751.1"/>
    <property type="molecule type" value="Genomic_DNA"/>
</dbReference>
<dbReference type="EMBL" id="CP002686">
    <property type="protein sequence ID" value="AEE79348.1"/>
    <property type="molecule type" value="Genomic_DNA"/>
</dbReference>
<dbReference type="EMBL" id="CP002686">
    <property type="protein sequence ID" value="AEE79349.1"/>
    <property type="molecule type" value="Genomic_DNA"/>
</dbReference>
<dbReference type="EMBL" id="CP002686">
    <property type="protein sequence ID" value="ANM65474.1"/>
    <property type="molecule type" value="Genomic_DNA"/>
</dbReference>
<dbReference type="EMBL" id="BT006384">
    <property type="protein sequence ID" value="AAP21192.1"/>
    <property type="molecule type" value="mRNA"/>
</dbReference>
<dbReference type="EMBL" id="AK227739">
    <property type="protein sequence ID" value="BAE99723.1"/>
    <property type="molecule type" value="mRNA"/>
</dbReference>
<dbReference type="PIR" id="T47656">
    <property type="entry name" value="T47656"/>
</dbReference>
<dbReference type="RefSeq" id="NP_001319756.1">
    <property type="nucleotide sequence ID" value="NM_001339724.1"/>
</dbReference>
<dbReference type="RefSeq" id="NP_191077.1">
    <property type="nucleotide sequence ID" value="NM_115375.5"/>
</dbReference>
<dbReference type="RefSeq" id="NP_974440.1">
    <property type="nucleotide sequence ID" value="NM_202711.2"/>
</dbReference>
<dbReference type="SMR" id="Q9M3D2"/>
<dbReference type="BioGRID" id="9999">
    <property type="interactions" value="104"/>
</dbReference>
<dbReference type="FunCoup" id="Q9M3D2">
    <property type="interactions" value="3313"/>
</dbReference>
<dbReference type="STRING" id="3702.Q9M3D2"/>
<dbReference type="iPTMnet" id="Q9M3D2"/>
<dbReference type="PaxDb" id="3702-AT3G55170.1"/>
<dbReference type="ProteomicsDB" id="226818"/>
<dbReference type="EnsemblPlants" id="AT3G55170.1">
    <property type="protein sequence ID" value="AT3G55170.1"/>
    <property type="gene ID" value="AT3G55170"/>
</dbReference>
<dbReference type="EnsemblPlants" id="AT3G55170.2">
    <property type="protein sequence ID" value="AT3G55170.2"/>
    <property type="gene ID" value="AT3G55170"/>
</dbReference>
<dbReference type="EnsemblPlants" id="AT3G55170.5">
    <property type="protein sequence ID" value="AT3G55170.5"/>
    <property type="gene ID" value="AT3G55170"/>
</dbReference>
<dbReference type="GeneID" id="824683"/>
<dbReference type="Gramene" id="AT3G55170.1">
    <property type="protein sequence ID" value="AT3G55170.1"/>
    <property type="gene ID" value="AT3G55170"/>
</dbReference>
<dbReference type="Gramene" id="AT3G55170.2">
    <property type="protein sequence ID" value="AT3G55170.2"/>
    <property type="gene ID" value="AT3G55170"/>
</dbReference>
<dbReference type="Gramene" id="AT3G55170.5">
    <property type="protein sequence ID" value="AT3G55170.5"/>
    <property type="gene ID" value="AT3G55170"/>
</dbReference>
<dbReference type="KEGG" id="ath:AT3G55170"/>
<dbReference type="Araport" id="AT3G55170"/>
<dbReference type="TAIR" id="AT3G55170"/>
<dbReference type="eggNOG" id="KOG3436">
    <property type="taxonomic scope" value="Eukaryota"/>
</dbReference>
<dbReference type="HOGENOM" id="CLU_110381_1_1_1"/>
<dbReference type="InParanoid" id="Q9M3D2"/>
<dbReference type="PhylomeDB" id="Q9M3D2"/>
<dbReference type="PRO" id="PR:Q9M3D2"/>
<dbReference type="Proteomes" id="UP000006548">
    <property type="component" value="Chromosome 3"/>
</dbReference>
<dbReference type="ExpressionAtlas" id="Q9M3D2">
    <property type="expression patterns" value="baseline and differential"/>
</dbReference>
<dbReference type="GO" id="GO:0022625">
    <property type="term" value="C:cytosolic large ribosomal subunit"/>
    <property type="evidence" value="ECO:0007005"/>
    <property type="project" value="TAIR"/>
</dbReference>
<dbReference type="GO" id="GO:0003735">
    <property type="term" value="F:structural constituent of ribosome"/>
    <property type="evidence" value="ECO:0000314"/>
    <property type="project" value="CAFA"/>
</dbReference>
<dbReference type="GO" id="GO:0000463">
    <property type="term" value="P:maturation of LSU-rRNA from tricistronic rRNA transcript (SSU-rRNA, 5.8S rRNA, LSU-rRNA)"/>
    <property type="evidence" value="ECO:0007669"/>
    <property type="project" value="InterPro"/>
</dbReference>
<dbReference type="GO" id="GO:0006412">
    <property type="term" value="P:translation"/>
    <property type="evidence" value="ECO:0007669"/>
    <property type="project" value="InterPro"/>
</dbReference>
<dbReference type="CDD" id="cd00427">
    <property type="entry name" value="Ribosomal_L29_HIP"/>
    <property type="match status" value="1"/>
</dbReference>
<dbReference type="FunFam" id="1.10.287.310:FF:000002">
    <property type="entry name" value="60S ribosomal protein L35"/>
    <property type="match status" value="1"/>
</dbReference>
<dbReference type="FunFam" id="6.10.250.3450:FF:000001">
    <property type="entry name" value="60S ribosomal protein L35"/>
    <property type="match status" value="1"/>
</dbReference>
<dbReference type="Gene3D" id="1.10.287.310">
    <property type="match status" value="1"/>
</dbReference>
<dbReference type="Gene3D" id="6.10.250.3450">
    <property type="match status" value="1"/>
</dbReference>
<dbReference type="HAMAP" id="MF_00374">
    <property type="entry name" value="Ribosomal_uL29"/>
    <property type="match status" value="1"/>
</dbReference>
<dbReference type="InterPro" id="IPR001854">
    <property type="entry name" value="Ribosomal_uL29"/>
</dbReference>
<dbReference type="InterPro" id="IPR018254">
    <property type="entry name" value="Ribosomal_uL29_CS"/>
</dbReference>
<dbReference type="InterPro" id="IPR045059">
    <property type="entry name" value="Ribosomal_uL29_euk"/>
</dbReference>
<dbReference type="InterPro" id="IPR036049">
    <property type="entry name" value="Ribosomal_uL29_sf"/>
</dbReference>
<dbReference type="NCBIfam" id="TIGR00012">
    <property type="entry name" value="L29"/>
    <property type="match status" value="1"/>
</dbReference>
<dbReference type="PANTHER" id="PTHR45722">
    <property type="entry name" value="60S RIBOSOMAL PROTEIN L35"/>
    <property type="match status" value="1"/>
</dbReference>
<dbReference type="PANTHER" id="PTHR45722:SF2">
    <property type="entry name" value="LARGE RIBOSOMAL SUBUNIT PROTEIN UL29-RELATED"/>
    <property type="match status" value="1"/>
</dbReference>
<dbReference type="Pfam" id="PF00831">
    <property type="entry name" value="Ribosomal_L29"/>
    <property type="match status" value="1"/>
</dbReference>
<dbReference type="SUPFAM" id="SSF46561">
    <property type="entry name" value="Ribosomal protein L29 (L29p)"/>
    <property type="match status" value="1"/>
</dbReference>
<dbReference type="PROSITE" id="PS00579">
    <property type="entry name" value="RIBOSOMAL_L29"/>
    <property type="match status" value="1"/>
</dbReference>
<protein>
    <recommendedName>
        <fullName evidence="1">Large ribosomal subunit protein uL29x</fullName>
    </recommendedName>
    <alternativeName>
        <fullName>60S ribosomal protein L35-3</fullName>
    </alternativeName>
</protein>
<proteinExistence type="evidence at transcript level"/>
<evidence type="ECO:0000303" key="1">
    <source>
    </source>
</evidence>
<evidence type="ECO:0000305" key="2"/>
<feature type="chain" id="PRO_0000130547" description="Large ribosomal subunit protein uL29x">
    <location>
        <begin position="1"/>
        <end position="123"/>
    </location>
</feature>
<reference key="1">
    <citation type="journal article" date="2000" name="Nature">
        <title>Sequence and analysis of chromosome 3 of the plant Arabidopsis thaliana.</title>
        <authorList>
            <person name="Salanoubat M."/>
            <person name="Lemcke K."/>
            <person name="Rieger M."/>
            <person name="Ansorge W."/>
            <person name="Unseld M."/>
            <person name="Fartmann B."/>
            <person name="Valle G."/>
            <person name="Bloecker H."/>
            <person name="Perez-Alonso M."/>
            <person name="Obermaier B."/>
            <person name="Delseny M."/>
            <person name="Boutry M."/>
            <person name="Grivell L.A."/>
            <person name="Mache R."/>
            <person name="Puigdomenech P."/>
            <person name="De Simone V."/>
            <person name="Choisne N."/>
            <person name="Artiguenave F."/>
            <person name="Robert C."/>
            <person name="Brottier P."/>
            <person name="Wincker P."/>
            <person name="Cattolico L."/>
            <person name="Weissenbach J."/>
            <person name="Saurin W."/>
            <person name="Quetier F."/>
            <person name="Schaefer M."/>
            <person name="Mueller-Auer S."/>
            <person name="Gabel C."/>
            <person name="Fuchs M."/>
            <person name="Benes V."/>
            <person name="Wurmbach E."/>
            <person name="Drzonek H."/>
            <person name="Erfle H."/>
            <person name="Jordan N."/>
            <person name="Bangert S."/>
            <person name="Wiedelmann R."/>
            <person name="Kranz H."/>
            <person name="Voss H."/>
            <person name="Holland R."/>
            <person name="Brandt P."/>
            <person name="Nyakatura G."/>
            <person name="Vezzi A."/>
            <person name="D'Angelo M."/>
            <person name="Pallavicini A."/>
            <person name="Toppo S."/>
            <person name="Simionati B."/>
            <person name="Conrad A."/>
            <person name="Hornischer K."/>
            <person name="Kauer G."/>
            <person name="Loehnert T.-H."/>
            <person name="Nordsiek G."/>
            <person name="Reichelt J."/>
            <person name="Scharfe M."/>
            <person name="Schoen O."/>
            <person name="Bargues M."/>
            <person name="Terol J."/>
            <person name="Climent J."/>
            <person name="Navarro P."/>
            <person name="Collado C."/>
            <person name="Perez-Perez A."/>
            <person name="Ottenwaelder B."/>
            <person name="Duchemin D."/>
            <person name="Cooke R."/>
            <person name="Laudie M."/>
            <person name="Berger-Llauro C."/>
            <person name="Purnelle B."/>
            <person name="Masuy D."/>
            <person name="de Haan M."/>
            <person name="Maarse A.C."/>
            <person name="Alcaraz J.-P."/>
            <person name="Cottet A."/>
            <person name="Casacuberta E."/>
            <person name="Monfort A."/>
            <person name="Argiriou A."/>
            <person name="Flores M."/>
            <person name="Liguori R."/>
            <person name="Vitale D."/>
            <person name="Mannhaupt G."/>
            <person name="Haase D."/>
            <person name="Schoof H."/>
            <person name="Rudd S."/>
            <person name="Zaccaria P."/>
            <person name="Mewes H.-W."/>
            <person name="Mayer K.F.X."/>
            <person name="Kaul S."/>
            <person name="Town C.D."/>
            <person name="Koo H.L."/>
            <person name="Tallon L.J."/>
            <person name="Jenkins J."/>
            <person name="Rooney T."/>
            <person name="Rizzo M."/>
            <person name="Walts A."/>
            <person name="Utterback T."/>
            <person name="Fujii C.Y."/>
            <person name="Shea T.P."/>
            <person name="Creasy T.H."/>
            <person name="Haas B."/>
            <person name="Maiti R."/>
            <person name="Wu D."/>
            <person name="Peterson J."/>
            <person name="Van Aken S."/>
            <person name="Pai G."/>
            <person name="Militscher J."/>
            <person name="Sellers P."/>
            <person name="Gill J.E."/>
            <person name="Feldblyum T.V."/>
            <person name="Preuss D."/>
            <person name="Lin X."/>
            <person name="Nierman W.C."/>
            <person name="Salzberg S.L."/>
            <person name="White O."/>
            <person name="Venter J.C."/>
            <person name="Fraser C.M."/>
            <person name="Kaneko T."/>
            <person name="Nakamura Y."/>
            <person name="Sato S."/>
            <person name="Kato T."/>
            <person name="Asamizu E."/>
            <person name="Sasamoto S."/>
            <person name="Kimura T."/>
            <person name="Idesawa K."/>
            <person name="Kawashima K."/>
            <person name="Kishida Y."/>
            <person name="Kiyokawa C."/>
            <person name="Kohara M."/>
            <person name="Matsumoto M."/>
            <person name="Matsuno A."/>
            <person name="Muraki A."/>
            <person name="Nakayama S."/>
            <person name="Nakazaki N."/>
            <person name="Shinpo S."/>
            <person name="Takeuchi C."/>
            <person name="Wada T."/>
            <person name="Watanabe A."/>
            <person name="Yamada M."/>
            <person name="Yasuda M."/>
            <person name="Tabata S."/>
        </authorList>
    </citation>
    <scope>NUCLEOTIDE SEQUENCE [LARGE SCALE GENOMIC DNA]</scope>
    <source>
        <strain>cv. Columbia</strain>
    </source>
</reference>
<reference key="2">
    <citation type="journal article" date="2017" name="Plant J.">
        <title>Araport11: a complete reannotation of the Arabidopsis thaliana reference genome.</title>
        <authorList>
            <person name="Cheng C.Y."/>
            <person name="Krishnakumar V."/>
            <person name="Chan A.P."/>
            <person name="Thibaud-Nissen F."/>
            <person name="Schobel S."/>
            <person name="Town C.D."/>
        </authorList>
    </citation>
    <scope>GENOME REANNOTATION</scope>
    <source>
        <strain>cv. Columbia</strain>
    </source>
</reference>
<reference key="3">
    <citation type="journal article" date="2003" name="Science">
        <title>Empirical analysis of transcriptional activity in the Arabidopsis genome.</title>
        <authorList>
            <person name="Yamada K."/>
            <person name="Lim J."/>
            <person name="Dale J.M."/>
            <person name="Chen H."/>
            <person name="Shinn P."/>
            <person name="Palm C.J."/>
            <person name="Southwick A.M."/>
            <person name="Wu H.C."/>
            <person name="Kim C.J."/>
            <person name="Nguyen M."/>
            <person name="Pham P.K."/>
            <person name="Cheuk R.F."/>
            <person name="Karlin-Newmann G."/>
            <person name="Liu S.X."/>
            <person name="Lam B."/>
            <person name="Sakano H."/>
            <person name="Wu T."/>
            <person name="Yu G."/>
            <person name="Miranda M."/>
            <person name="Quach H.L."/>
            <person name="Tripp M."/>
            <person name="Chang C.H."/>
            <person name="Lee J.M."/>
            <person name="Toriumi M.J."/>
            <person name="Chan M.M."/>
            <person name="Tang C.C."/>
            <person name="Onodera C.S."/>
            <person name="Deng J.M."/>
            <person name="Akiyama K."/>
            <person name="Ansari Y."/>
            <person name="Arakawa T."/>
            <person name="Banh J."/>
            <person name="Banno F."/>
            <person name="Bowser L."/>
            <person name="Brooks S.Y."/>
            <person name="Carninci P."/>
            <person name="Chao Q."/>
            <person name="Choy N."/>
            <person name="Enju A."/>
            <person name="Goldsmith A.D."/>
            <person name="Gurjal M."/>
            <person name="Hansen N.F."/>
            <person name="Hayashizaki Y."/>
            <person name="Johnson-Hopson C."/>
            <person name="Hsuan V.W."/>
            <person name="Iida K."/>
            <person name="Karnes M."/>
            <person name="Khan S."/>
            <person name="Koesema E."/>
            <person name="Ishida J."/>
            <person name="Jiang P.X."/>
            <person name="Jones T."/>
            <person name="Kawai J."/>
            <person name="Kamiya A."/>
            <person name="Meyers C."/>
            <person name="Nakajima M."/>
            <person name="Narusaka M."/>
            <person name="Seki M."/>
            <person name="Sakurai T."/>
            <person name="Satou M."/>
            <person name="Tamse R."/>
            <person name="Vaysberg M."/>
            <person name="Wallender E.K."/>
            <person name="Wong C."/>
            <person name="Yamamura Y."/>
            <person name="Yuan S."/>
            <person name="Shinozaki K."/>
            <person name="Davis R.W."/>
            <person name="Theologis A."/>
            <person name="Ecker J.R."/>
        </authorList>
    </citation>
    <scope>NUCLEOTIDE SEQUENCE [LARGE SCALE MRNA]</scope>
    <source>
        <strain>cv. Columbia</strain>
    </source>
</reference>
<reference key="4">
    <citation type="submission" date="2006-07" db="EMBL/GenBank/DDBJ databases">
        <title>Large-scale analysis of RIKEN Arabidopsis full-length (RAFL) cDNAs.</title>
        <authorList>
            <person name="Totoki Y."/>
            <person name="Seki M."/>
            <person name="Ishida J."/>
            <person name="Nakajima M."/>
            <person name="Enju A."/>
            <person name="Kamiya A."/>
            <person name="Narusaka M."/>
            <person name="Shin-i T."/>
            <person name="Nakagawa M."/>
            <person name="Sakamoto N."/>
            <person name="Oishi K."/>
            <person name="Kohara Y."/>
            <person name="Kobayashi M."/>
            <person name="Toyoda A."/>
            <person name="Sakaki Y."/>
            <person name="Sakurai T."/>
            <person name="Iida K."/>
            <person name="Akiyama K."/>
            <person name="Satou M."/>
            <person name="Toyoda T."/>
            <person name="Konagaya A."/>
            <person name="Carninci P."/>
            <person name="Kawai J."/>
            <person name="Hayashizaki Y."/>
            <person name="Shinozaki K."/>
        </authorList>
    </citation>
    <scope>NUCLEOTIDE SEQUENCE [LARGE SCALE MRNA]</scope>
    <source>
        <strain>cv. Columbia</strain>
    </source>
</reference>
<reference key="5">
    <citation type="journal article" date="2001" name="Plant Physiol.">
        <title>The organization of cytoplasmic ribosomal protein genes in the Arabidopsis genome.</title>
        <authorList>
            <person name="Barakat A."/>
            <person name="Szick-Miranda K."/>
            <person name="Chang I.-F."/>
            <person name="Guyot R."/>
            <person name="Blanc G."/>
            <person name="Cooke R."/>
            <person name="Delseny M."/>
            <person name="Bailey-Serres J."/>
        </authorList>
    </citation>
    <scope>GENE FAMILY ORGANIZATION</scope>
    <scope>NOMENCLATURE</scope>
</reference>
<reference key="6">
    <citation type="journal article" date="2023" name="Plant Cell">
        <title>An updated nomenclature for plant ribosomal protein genes.</title>
        <authorList>
            <person name="Scarpin M.R."/>
            <person name="Busche M."/>
            <person name="Martinez R.E."/>
            <person name="Harper L.C."/>
            <person name="Reiser L."/>
            <person name="Szakonyi D."/>
            <person name="Merchante C."/>
            <person name="Lan T."/>
            <person name="Xiong W."/>
            <person name="Mo B."/>
            <person name="Tang G."/>
            <person name="Chen X."/>
            <person name="Bailey-Serres J."/>
            <person name="Browning K.S."/>
            <person name="Brunkard J.O."/>
        </authorList>
    </citation>
    <scope>NOMENCLATURE</scope>
</reference>
<comment type="similarity">
    <text evidence="2">Belongs to the universal ribosomal protein uL29 family.</text>
</comment>
<sequence length="123" mass="14177">MARIKVHELRDKSKSDLSTQLKELKAELASLRVAKVTGGAPNKLSKIKVVRKSIAQVLTVSSQKQKSALREAYKNKKLLPLDLRPKKTRAIRRRLTKHQASLKTEREKKKDMYFPIRKYAIKV</sequence>
<accession>Q9M3D2</accession>
<accession>Q0WT25</accession>
<name>RL353_ARATH</name>